<name>DHP1_ECOLX</name>
<gene>
    <name evidence="6" type="primary">sul1</name>
    <name evidence="7" type="synonym">sulI</name>
</gene>
<keyword id="KW-0002">3D-structure</keyword>
<keyword id="KW-0046">Antibiotic resistance</keyword>
<keyword id="KW-0289">Folate biosynthesis</keyword>
<keyword id="KW-0460">Magnesium</keyword>
<keyword id="KW-0479">Metal-binding</keyword>
<keyword id="KW-0614">Plasmid</keyword>
<keyword id="KW-0808">Transferase</keyword>
<keyword id="KW-0814">Transposable element</keyword>
<organism>
    <name type="scientific">Escherichia coli</name>
    <dbReference type="NCBI Taxonomy" id="562"/>
    <lineage>
        <taxon>Bacteria</taxon>
        <taxon>Pseudomonadati</taxon>
        <taxon>Pseudomonadota</taxon>
        <taxon>Gammaproteobacteria</taxon>
        <taxon>Enterobacterales</taxon>
        <taxon>Enterobacteriaceae</taxon>
        <taxon>Escherichia</taxon>
    </lineage>
</organism>
<evidence type="ECO:0000250" key="1">
    <source>
        <dbReference type="UniProtKB" id="C0HMD9"/>
    </source>
</evidence>
<evidence type="ECO:0000250" key="2">
    <source>
        <dbReference type="UniProtKB" id="P0AC13"/>
    </source>
</evidence>
<evidence type="ECO:0000250" key="3">
    <source>
        <dbReference type="UniProtKB" id="P9WND1"/>
    </source>
</evidence>
<evidence type="ECO:0000255" key="4">
    <source>
        <dbReference type="PROSITE-ProRule" id="PRU00334"/>
    </source>
</evidence>
<evidence type="ECO:0000269" key="5">
    <source>
    </source>
</evidence>
<evidence type="ECO:0000303" key="6">
    <source>
    </source>
</evidence>
<evidence type="ECO:0000305" key="7"/>
<evidence type="ECO:0007744" key="8">
    <source>
        <dbReference type="PDB" id="7S2I"/>
    </source>
</evidence>
<evidence type="ECO:0007829" key="9">
    <source>
        <dbReference type="PDB" id="7S2I"/>
    </source>
</evidence>
<sequence>MVTVFGILNLTEDSFFDESRRLDPAGAVTAAIEMLRVGSDVVDVGPAASHPDARPVSPADEIRRIAPLLDALSDQMHRVSIDSFQPETQRYALKRGVGYLNDIQGFPDPALYPDIAEADCRLVVMHSAQRDGIATRTGHLRPEDALDEIVRFFEARVSALRRSGVAADRLILDPGMGFFLSPAPETSLHVLSNLQKLKSALGLPLLVSVSRKSFLGATVGLPVKDLGPASLAAELHAIGNGADYVRTHAPGDLRSAITFSETLAKFRSRDARDRGLDHA</sequence>
<proteinExistence type="evidence at protein level"/>
<protein>
    <recommendedName>
        <fullName>Dihydropteroate synthase type-1</fullName>
        <ecNumber evidence="5">2.5.1.15</ecNumber>
    </recommendedName>
    <alternativeName>
        <fullName>Dihydropteroate pyrophosphorylase type I</fullName>
    </alternativeName>
    <alternativeName>
        <fullName>Dihydropteroate synthase type I</fullName>
        <shortName>DHPS</shortName>
    </alternativeName>
</protein>
<dbReference type="EC" id="2.5.1.15" evidence="5"/>
<dbReference type="EMBL" id="X12868">
    <property type="protein sequence ID" value="CAA31358.1"/>
    <property type="molecule type" value="Genomic_DNA"/>
</dbReference>
<dbReference type="EMBL" id="M95287">
    <property type="protein sequence ID" value="AAB59087.1"/>
    <property type="molecule type" value="Genomic_DNA"/>
</dbReference>
<dbReference type="EMBL" id="U42226">
    <property type="protein sequence ID" value="AAC53726.1"/>
    <property type="molecule type" value="Genomic_DNA"/>
</dbReference>
<dbReference type="EMBL" id="X15024">
    <property type="protein sequence ID" value="CAA33123.1"/>
    <property type="molecule type" value="Genomic_DNA"/>
</dbReference>
<dbReference type="EMBL" id="A07921">
    <property type="protein sequence ID" value="CAA00729.1"/>
    <property type="molecule type" value="Unassigned_DNA"/>
</dbReference>
<dbReference type="EMBL" id="X12870">
    <property type="protein sequence ID" value="CAA31364.1"/>
    <property type="molecule type" value="Genomic_DNA"/>
</dbReference>
<dbReference type="EMBL" id="AF047479">
    <property type="protein sequence ID" value="AAC14739.1"/>
    <property type="molecule type" value="Genomic_DNA"/>
</dbReference>
<dbReference type="EMBL" id="L06418">
    <property type="protein sequence ID" value="AAA92747.1"/>
    <property type="molecule type" value="Genomic_DNA"/>
</dbReference>
<dbReference type="EMBL" id="L06418">
    <property type="protein sequence ID" value="AAA92751.3"/>
    <property type="molecule type" value="Genomic_DNA"/>
</dbReference>
<dbReference type="EMBL" id="U04277">
    <property type="protein sequence ID" value="AAB60179.1"/>
    <property type="molecule type" value="Genomic_DNA"/>
</dbReference>
<dbReference type="EMBL" id="AF071413">
    <property type="protein sequence ID" value="AAC33914.1"/>
    <property type="molecule type" value="Genomic_DNA"/>
</dbReference>
<dbReference type="EMBL" id="AF205943">
    <property type="protein sequence ID" value="AAG45723.1"/>
    <property type="molecule type" value="Genomic_DNA"/>
</dbReference>
<dbReference type="EMBL" id="U12441">
    <property type="protein sequence ID" value="AAK95985.1"/>
    <property type="molecule type" value="Genomic_DNA"/>
</dbReference>
<dbReference type="EMBL" id="AB061794">
    <property type="protein sequence ID" value="BAB72156.1"/>
    <property type="molecule type" value="Genomic_DNA"/>
</dbReference>
<dbReference type="EMBL" id="AF174129">
    <property type="protein sequence ID" value="AAK60189.2"/>
    <property type="molecule type" value="Genomic_DNA"/>
</dbReference>
<dbReference type="EMBL" id="AF550679">
    <property type="protein sequence ID" value="AAO49595.1"/>
    <property type="molecule type" value="Genomic_DNA"/>
</dbReference>
<dbReference type="EMBL" id="AY259085">
    <property type="protein sequence ID" value="AAP20908.1"/>
    <property type="molecule type" value="Genomic_DNA"/>
</dbReference>
<dbReference type="EMBL" id="AY259085">
    <property type="protein sequence ID" value="AAP20913.1"/>
    <property type="molecule type" value="Genomic_DNA"/>
</dbReference>
<dbReference type="EMBL" id="AY259086">
    <property type="protein sequence ID" value="AAP20924.1"/>
    <property type="molecule type" value="Genomic_DNA"/>
</dbReference>
<dbReference type="EMBL" id="AY259086">
    <property type="protein sequence ID" value="AAP20929.1"/>
    <property type="molecule type" value="Genomic_DNA"/>
</dbReference>
<dbReference type="EMBL" id="AY224185">
    <property type="protein sequence ID" value="AAP51287.1"/>
    <property type="molecule type" value="Genomic_DNA"/>
</dbReference>
<dbReference type="EMBL" id="AY260546">
    <property type="protein sequence ID" value="AAP22979.1"/>
    <property type="molecule type" value="Genomic_DNA"/>
</dbReference>
<dbReference type="EMBL" id="AY339625">
    <property type="protein sequence ID" value="AAQ16671.1"/>
    <property type="molecule type" value="Genomic_DNA"/>
</dbReference>
<dbReference type="EMBL" id="L06822">
    <property type="protein sequence ID" value="AAW29415.1"/>
    <property type="molecule type" value="Genomic_DNA"/>
</dbReference>
<dbReference type="EMBL" id="L06822">
    <property type="protein sequence ID" value="AAW29418.1"/>
    <property type="molecule type" value="Genomic_DNA"/>
</dbReference>
<dbReference type="EMBL" id="AY655485">
    <property type="protein sequence ID" value="AAW31097.1"/>
    <property type="molecule type" value="Genomic_DNA"/>
</dbReference>
<dbReference type="EMBL" id="AY878717">
    <property type="protein sequence ID" value="AAX18266.1"/>
    <property type="molecule type" value="Genomic_DNA"/>
</dbReference>
<dbReference type="EMBL" id="AY878717">
    <property type="protein sequence ID" value="AAX18269.1"/>
    <property type="molecule type" value="Genomic_DNA"/>
</dbReference>
<dbReference type="EMBL" id="AY878718">
    <property type="protein sequence ID" value="AAX18276.1"/>
    <property type="molecule type" value="Genomic_DNA"/>
</dbReference>
<dbReference type="EMBL" id="AY878718">
    <property type="protein sequence ID" value="AAX18279.1"/>
    <property type="molecule type" value="Genomic_DNA"/>
</dbReference>
<dbReference type="EMBL" id="AY214164">
    <property type="protein sequence ID" value="AAP51280.1"/>
    <property type="molecule type" value="Genomic_DNA"/>
</dbReference>
<dbReference type="EMBL" id="X58425">
    <property type="protein sequence ID" value="CAA41328.1"/>
    <property type="molecule type" value="Genomic_DNA"/>
</dbReference>
<dbReference type="PIR" id="A60174">
    <property type="entry name" value="SYECOG"/>
</dbReference>
<dbReference type="PIR" id="T45123">
    <property type="entry name" value="T45123"/>
</dbReference>
<dbReference type="RefSeq" id="NP_863000.1">
    <property type="nucleotide sequence ID" value="NC_004998.1"/>
</dbReference>
<dbReference type="RefSeq" id="WP_000259031.1">
    <property type="nucleotide sequence ID" value="NZ_WXZA01000039.1"/>
</dbReference>
<dbReference type="RefSeq" id="YP_001096354.1">
    <property type="nucleotide sequence ID" value="NC_009132.1"/>
</dbReference>
<dbReference type="RefSeq" id="YP_001096411.1">
    <property type="nucleotide sequence ID" value="NC_009133.1"/>
</dbReference>
<dbReference type="RefSeq" id="YP_002891164.1">
    <property type="nucleotide sequence ID" value="NC_012690.1"/>
</dbReference>
<dbReference type="RefSeq" id="YP_002894492.1">
    <property type="nucleotide sequence ID" value="NC_012692.1"/>
</dbReference>
<dbReference type="RefSeq" id="YP_004558213.1">
    <property type="nucleotide sequence ID" value="NC_015599.1"/>
</dbReference>
<dbReference type="RefSeq" id="YP_006903340.1">
    <property type="nucleotide sequence ID" value="NC_019045.2"/>
</dbReference>
<dbReference type="RefSeq" id="YP_006939957.1">
    <property type="nucleotide sequence ID" value="NC_018994.1"/>
</dbReference>
<dbReference type="RefSeq" id="YP_006952407.1">
    <property type="nucleotide sequence ID" value="NC_019062.1"/>
</dbReference>
<dbReference type="RefSeq" id="YP_006952437.1">
    <property type="nucleotide sequence ID" value="NC_019063.1"/>
</dbReference>
<dbReference type="RefSeq" id="YP_006952978.1">
    <property type="nucleotide sequence ID" value="NC_019066.1"/>
</dbReference>
<dbReference type="RefSeq" id="YP_006953197.1">
    <property type="nucleotide sequence ID" value="NC_019069.1"/>
</dbReference>
<dbReference type="RefSeq" id="YP_006953612.1">
    <property type="nucleotide sequence ID" value="NC_019081.1"/>
</dbReference>
<dbReference type="RefSeq" id="YP_006953620.1">
    <property type="nucleotide sequence ID" value="NC_019082.1"/>
</dbReference>
<dbReference type="RefSeq" id="YP_008574825.1">
    <property type="nucleotide sequence ID" value="NC_022374.1"/>
</dbReference>
<dbReference type="RefSeq" id="YP_009023104.1">
    <property type="nucleotide sequence ID" value="NC_023909.1"/>
</dbReference>
<dbReference type="RefSeq" id="YP_009060115.1">
    <property type="nucleotide sequence ID" value="NC_024956.1"/>
</dbReference>
<dbReference type="RefSeq" id="YP_009061085.1">
    <property type="nucleotide sequence ID" value="NC_024975.1"/>
</dbReference>
<dbReference type="RefSeq" id="YP_009068292.1">
    <property type="nucleotide sequence ID" value="NC_025139.1"/>
</dbReference>
<dbReference type="RefSeq" id="YP_009070794.1">
    <property type="nucleotide sequence ID" value="NC_025175.1"/>
</dbReference>
<dbReference type="RefSeq" id="YP_009182147.1">
    <property type="nucleotide sequence ID" value="NC_028464.1"/>
</dbReference>
<dbReference type="RefSeq" id="YP_190215.1">
    <property type="nucleotide sequence ID" value="NC_006671.1"/>
</dbReference>
<dbReference type="RefSeq" id="YP_724471.1">
    <property type="nucleotide sequence ID" value="NC_007682.3"/>
</dbReference>
<dbReference type="PDB" id="7S2I">
    <property type="method" value="X-ray"/>
    <property type="resolution" value="2.32 A"/>
    <property type="chains" value="A/B=1-279"/>
</dbReference>
<dbReference type="PDBsum" id="7S2I"/>
<dbReference type="SMR" id="P0C002"/>
<dbReference type="DrugBank" id="DB00634">
    <property type="generic name" value="Sulfacetamide"/>
</dbReference>
<dbReference type="GeneID" id="93757120"/>
<dbReference type="OMA" id="YIMKNID"/>
<dbReference type="UniPathway" id="UPA00077">
    <property type="reaction ID" value="UER00156"/>
</dbReference>
<dbReference type="GO" id="GO:0005829">
    <property type="term" value="C:cytosol"/>
    <property type="evidence" value="ECO:0007669"/>
    <property type="project" value="TreeGrafter"/>
</dbReference>
<dbReference type="GO" id="GO:0004156">
    <property type="term" value="F:dihydropteroate synthase activity"/>
    <property type="evidence" value="ECO:0007669"/>
    <property type="project" value="UniProtKB-EC"/>
</dbReference>
<dbReference type="GO" id="GO:0046872">
    <property type="term" value="F:metal ion binding"/>
    <property type="evidence" value="ECO:0007669"/>
    <property type="project" value="UniProtKB-KW"/>
</dbReference>
<dbReference type="GO" id="GO:0046656">
    <property type="term" value="P:folic acid biosynthetic process"/>
    <property type="evidence" value="ECO:0007669"/>
    <property type="project" value="UniProtKB-KW"/>
</dbReference>
<dbReference type="GO" id="GO:0046677">
    <property type="term" value="P:response to antibiotic"/>
    <property type="evidence" value="ECO:0007669"/>
    <property type="project" value="UniProtKB-KW"/>
</dbReference>
<dbReference type="GO" id="GO:0046654">
    <property type="term" value="P:tetrahydrofolate biosynthetic process"/>
    <property type="evidence" value="ECO:0007669"/>
    <property type="project" value="UniProtKB-UniPathway"/>
</dbReference>
<dbReference type="CDD" id="cd00739">
    <property type="entry name" value="DHPS"/>
    <property type="match status" value="1"/>
</dbReference>
<dbReference type="Gene3D" id="3.20.20.20">
    <property type="entry name" value="Dihydropteroate synthase-like"/>
    <property type="match status" value="1"/>
</dbReference>
<dbReference type="InterPro" id="IPR045031">
    <property type="entry name" value="DHP_synth-like"/>
</dbReference>
<dbReference type="InterPro" id="IPR006390">
    <property type="entry name" value="DHP_synth_dom"/>
</dbReference>
<dbReference type="InterPro" id="IPR011005">
    <property type="entry name" value="Dihydropteroate_synth-like_sf"/>
</dbReference>
<dbReference type="InterPro" id="IPR000489">
    <property type="entry name" value="Pterin-binding_dom"/>
</dbReference>
<dbReference type="NCBIfam" id="TIGR01496">
    <property type="entry name" value="DHPS"/>
    <property type="match status" value="1"/>
</dbReference>
<dbReference type="NCBIfam" id="NF000294">
    <property type="entry name" value="Sul1"/>
    <property type="match status" value="1"/>
</dbReference>
<dbReference type="PANTHER" id="PTHR20941">
    <property type="entry name" value="FOLATE SYNTHESIS PROTEINS"/>
    <property type="match status" value="1"/>
</dbReference>
<dbReference type="PANTHER" id="PTHR20941:SF1">
    <property type="entry name" value="FOLIC ACID SYNTHESIS PROTEIN FOL1"/>
    <property type="match status" value="1"/>
</dbReference>
<dbReference type="Pfam" id="PF00809">
    <property type="entry name" value="Pterin_bind"/>
    <property type="match status" value="1"/>
</dbReference>
<dbReference type="SUPFAM" id="SSF51717">
    <property type="entry name" value="Dihydropteroate synthetase-like"/>
    <property type="match status" value="1"/>
</dbReference>
<dbReference type="PROSITE" id="PS00792">
    <property type="entry name" value="DHPS_1"/>
    <property type="match status" value="1"/>
</dbReference>
<dbReference type="PROSITE" id="PS00793">
    <property type="entry name" value="DHPS_2"/>
    <property type="match status" value="1"/>
</dbReference>
<dbReference type="PROSITE" id="PS50972">
    <property type="entry name" value="PTERIN_BINDING"/>
    <property type="match status" value="1"/>
</dbReference>
<accession>P0C002</accession>
<accession>P11744</accession>
<accession>Q79LJ7</accession>
<accession>Q93K51</accession>
<feature type="chain" id="PRO_0000168201" description="Dihydropteroate synthase type-1">
    <location>
        <begin position="1"/>
        <end position="279"/>
    </location>
</feature>
<feature type="domain" description="Pterin-binding" evidence="4">
    <location>
        <begin position="1"/>
        <end position="258"/>
    </location>
</feature>
<feature type="binding site" evidence="3">
    <location>
        <position position="9"/>
    </location>
    <ligand>
        <name>Mg(2+)</name>
        <dbReference type="ChEBI" id="CHEBI:18420"/>
    </ligand>
</feature>
<feature type="binding site" evidence="1">
    <location>
        <position position="49"/>
    </location>
    <ligand>
        <name>4-aminobenzoate</name>
        <dbReference type="ChEBI" id="CHEBI:17836"/>
    </ligand>
</feature>
<feature type="binding site" evidence="2">
    <location>
        <position position="82"/>
    </location>
    <ligand>
        <name>(7,8-dihydropterin-6-yl)methyl diphosphate</name>
        <dbReference type="ChEBI" id="CHEBI:72950"/>
    </ligand>
</feature>
<feature type="binding site" evidence="2">
    <location>
        <position position="101"/>
    </location>
    <ligand>
        <name>(7,8-dihydropterin-6-yl)methyl diphosphate</name>
        <dbReference type="ChEBI" id="CHEBI:72950"/>
    </ligand>
</feature>
<feature type="binding site" evidence="1">
    <location>
        <position position="101"/>
    </location>
    <ligand>
        <name>6-hydroxymethyl-7,8-dihydropterin</name>
        <dbReference type="ChEBI" id="CHEBI:44841"/>
    </ligand>
</feature>
<feature type="binding site" evidence="2">
    <location>
        <position position="173"/>
    </location>
    <ligand>
        <name>(7,8-dihydropterin-6-yl)methyl diphosphate</name>
        <dbReference type="ChEBI" id="CHEBI:72950"/>
    </ligand>
</feature>
<feature type="binding site" evidence="1">
    <location>
        <position position="173"/>
    </location>
    <ligand>
        <name>6-hydroxymethyl-7,8-dihydropterin</name>
        <dbReference type="ChEBI" id="CHEBI:44841"/>
    </ligand>
</feature>
<feature type="binding site" evidence="1">
    <location>
        <position position="178"/>
    </location>
    <ligand>
        <name>4-aminobenzoate</name>
        <dbReference type="ChEBI" id="CHEBI:17836"/>
    </ligand>
</feature>
<feature type="binding site" evidence="2">
    <location>
        <position position="212"/>
    </location>
    <ligand>
        <name>(7,8-dihydropterin-6-yl)methyl diphosphate</name>
        <dbReference type="ChEBI" id="CHEBI:72950"/>
    </ligand>
</feature>
<feature type="binding site" evidence="1">
    <location>
        <position position="212"/>
    </location>
    <ligand>
        <name>6-hydroxymethyl-7,8-dihydropterin</name>
        <dbReference type="ChEBI" id="CHEBI:44841"/>
    </ligand>
</feature>
<feature type="binding site" evidence="1">
    <location>
        <position position="213"/>
    </location>
    <ligand>
        <name>4-aminobenzoate</name>
        <dbReference type="ChEBI" id="CHEBI:17836"/>
    </ligand>
</feature>
<feature type="binding site" evidence="2">
    <location>
        <begin position="246"/>
        <end position="248"/>
    </location>
    <ligand>
        <name>(7,8-dihydropterin-6-yl)methyl diphosphate</name>
        <dbReference type="ChEBI" id="CHEBI:72950"/>
    </ligand>
</feature>
<feature type="mutagenesis site" description="Similar catalytic efficiency for para-aminobenzoate (pABA) as substrate as wild-type. Significantly increases competitive inhibition by sulfamethoxazole (SMX) versus pABA. Increases preference for SMX as a substrate for the dihydropteroate synthase reaction. Drastically reduces ability to complement folP deletion mutation in E.coli strain BW25113." evidence="5">
    <original>F</original>
    <variation>G</variation>
    <location>
        <position position="178"/>
    </location>
</feature>
<feature type="mutagenesis site" description="Does not grow in the absence of thymidine, on a solid substrate, but grows slowly in broth culture, in presence of the folP deletion mutation in E.coli strain BW25113. However, enzyme expression level is normal." evidence="5">
    <location>
        <position position="178"/>
    </location>
</feature>
<feature type="mutagenesis site" description="Drastically reduces ability to complement folP deletion mutation in E.coli strain BW25113, except has no effect on resistance to sulfisoxazole (SOZ). Does not adversely impact growth or enzyme expression levels." evidence="5">
    <original>L</original>
    <variation>E</variation>
    <location>
        <position position="180"/>
    </location>
</feature>
<feature type="mutagenesis site" description="Fully complements folP deletion mutation in E.coli strain BW25113. Does not adversely impact growth or enzyme expression levels." evidence="5">
    <original>L</original>
    <variation>K</variation>
    <location>
        <position position="180"/>
    </location>
</feature>
<feature type="sequence conflict" description="In Ref. 3; CAA00729." evidence="7" ref="3">
    <original>F</original>
    <variation>I</variation>
    <location>
        <position position="259"/>
    </location>
</feature>
<feature type="strand" evidence="9">
    <location>
        <begin position="3"/>
        <end position="9"/>
    </location>
</feature>
<feature type="helix" evidence="9">
    <location>
        <begin position="13"/>
        <end position="15"/>
    </location>
</feature>
<feature type="helix" evidence="9">
    <location>
        <begin position="24"/>
        <end position="36"/>
    </location>
</feature>
<feature type="strand" evidence="9">
    <location>
        <begin position="40"/>
        <end position="45"/>
    </location>
</feature>
<feature type="helix" evidence="9">
    <location>
        <begin position="58"/>
        <end position="71"/>
    </location>
</feature>
<feature type="helix" evidence="9">
    <location>
        <begin position="73"/>
        <end position="78"/>
    </location>
</feature>
<feature type="strand" evidence="9">
    <location>
        <begin position="79"/>
        <end position="82"/>
    </location>
</feature>
<feature type="helix" evidence="9">
    <location>
        <begin position="86"/>
        <end position="95"/>
    </location>
</feature>
<feature type="strand" evidence="9">
    <location>
        <begin position="98"/>
        <end position="102"/>
    </location>
</feature>
<feature type="helix" evidence="9">
    <location>
        <begin position="109"/>
        <end position="111"/>
    </location>
</feature>
<feature type="helix" evidence="9">
    <location>
        <begin position="112"/>
        <end position="117"/>
    </location>
</feature>
<feature type="strand" evidence="9">
    <location>
        <begin position="121"/>
        <end position="125"/>
    </location>
</feature>
<feature type="helix" evidence="9">
    <location>
        <begin position="142"/>
        <end position="162"/>
    </location>
</feature>
<feature type="helix" evidence="9">
    <location>
        <begin position="167"/>
        <end position="169"/>
    </location>
</feature>
<feature type="strand" evidence="9">
    <location>
        <begin position="170"/>
        <end position="173"/>
    </location>
</feature>
<feature type="helix" evidence="9">
    <location>
        <begin position="177"/>
        <end position="179"/>
    </location>
</feature>
<feature type="helix" evidence="9">
    <location>
        <begin position="184"/>
        <end position="192"/>
    </location>
</feature>
<feature type="helix" evidence="9">
    <location>
        <begin position="194"/>
        <end position="201"/>
    </location>
</feature>
<feature type="strand" evidence="9">
    <location>
        <begin position="205"/>
        <end position="207"/>
    </location>
</feature>
<feature type="helix" evidence="9">
    <location>
        <begin position="213"/>
        <end position="219"/>
    </location>
</feature>
<feature type="helix" evidence="9">
    <location>
        <begin position="223"/>
        <end position="225"/>
    </location>
</feature>
<feature type="helix" evidence="9">
    <location>
        <begin position="227"/>
        <end position="239"/>
    </location>
</feature>
<feature type="strand" evidence="9">
    <location>
        <begin position="242"/>
        <end position="248"/>
    </location>
</feature>
<feature type="helix" evidence="9">
    <location>
        <begin position="250"/>
        <end position="264"/>
    </location>
</feature>
<reference key="1">
    <citation type="journal article" date="1988" name="Mol. Gen. Genet.">
        <title>Site-specific recombination promotes linkage between trimethoprim- and sulfonamide resistance genes. Sequence characterization of dhfrV and sulI and a recombination active locus of Tn21.</title>
        <authorList>
            <person name="Sundstroem L."/>
            <person name="Radstroem P."/>
            <person name="Swedberg G."/>
            <person name="Skoeld O."/>
        </authorList>
    </citation>
    <scope>NUCLEOTIDE SEQUENCE [GENOMIC DNA]</scope>
    <source>
        <plasmid>IncW R388</plasmid>
        <plasmid>pLMO20</plasmid>
        <transposon>Tn21</transposon>
    </source>
</reference>
<reference key="2">
    <citation type="journal article" date="1989" name="Mol. Microbiol.">
        <title>A novel family of potentially mobile DNA elements encoding site-specific gene-integration functions: integrons.</title>
        <authorList>
            <person name="Stokes H.W."/>
            <person name="Hall R.M."/>
        </authorList>
    </citation>
    <scope>NUCLEOTIDE SEQUENCE [GENOMIC DNA]</scope>
    <source>
        <plasmid>IncFII R100 (NR1)</plasmid>
        <plasmid>IncN R46</plasmid>
        <plasmid>pDGO101</plasmid>
    </source>
</reference>
<reference key="3">
    <citation type="journal article" date="1989" name="Nucleic Acids Res.">
        <title>Nucleotide sequence of the sulfonamide resistance gene from plasmid R46.</title>
        <authorList>
            <person name="Guerineau F."/>
            <person name="Mullineaux P.M."/>
        </authorList>
    </citation>
    <scope>NUCLEOTIDE SEQUENCE [GENOMIC DNA]</scope>
    <source>
        <plasmid>IncN R46</plasmid>
    </source>
</reference>
<reference key="4">
    <citation type="submission" date="1989-11" db="EMBL/GenBank/DDBJ databases">
        <authorList>
            <person name="Sundstroem L."/>
        </authorList>
    </citation>
    <scope>NUCLEOTIDE SEQUENCE [GENOMIC DNA]</scope>
    <source>
        <plasmid>R6-5</plasmid>
        <transposon>Tn21</transposon>
    </source>
</reference>
<reference key="5">
    <citation type="journal article" date="1992" name="J. Bacteriol.">
        <title>The chloramphenicol acetyltransferase gene of Tn2424: a new breed of cat.</title>
        <authorList>
            <person name="Parent R."/>
            <person name="Roy P.H."/>
        </authorList>
    </citation>
    <scope>NUCLEOTIDE SEQUENCE [GENOMIC DNA]</scope>
    <source>
        <plasmid>IncFII NR79</plasmid>
        <transposon>Tn2424</transposon>
    </source>
</reference>
<reference key="6">
    <citation type="journal article" date="1993" name="Plasmid">
        <title>The partial 3'-conserved segment duplications in the integrons In6 from pSa and In7 from pDGO100 have a common origin.</title>
        <authorList>
            <person name="Stokes H.W."/>
            <person name="Tomaras C."/>
            <person name="Parsons Y."/>
            <person name="Hall R.M."/>
        </authorList>
    </citation>
    <scope>NUCLEOTIDE SEQUENCE [GENOMIC DNA]</scope>
    <scope>NUCLEOTIDE SEQUENCE [GENOMIC DNA] OF 120-279</scope>
    <source>
        <plasmid>IncW pSa</plasmid>
        <plasmid>pDGO100</plasmid>
    </source>
</reference>
<reference key="7">
    <citation type="journal article" date="1994" name="Plasmid">
        <title>DNA sequence of direct repeats of the sulI gene of plasmid pSa.</title>
        <authorList>
            <person name="Valentine C.R."/>
            <person name="Heinrich M.J."/>
            <person name="Chissoe S.L."/>
            <person name="Roe B.A."/>
        </authorList>
    </citation>
    <scope>NUCLEOTIDE SEQUENCE [GENOMIC DNA]</scope>
    <source>
        <plasmid>IncW pSa</plasmid>
    </source>
</reference>
<reference key="8">
    <citation type="journal article" date="1999" name="Microbiol. Mol. Biol. Rev.">
        <title>Transposon Tn21, flagship of the floating genome.</title>
        <authorList>
            <person name="Liebert C.A."/>
            <person name="Hall R.M."/>
            <person name="Summers A.O."/>
        </authorList>
    </citation>
    <scope>NUCLEOTIDE SEQUENCE [GENOMIC DNA]</scope>
    <source>
        <transposon>Tn21</transposon>
    </source>
</reference>
<reference key="9">
    <citation type="journal article" date="2001" name="J. Bacteriol.">
        <title>Characterization of In53, a class 1 plasmid- and composite transposon-located integron of Escherichia coli which carries an unusual array of gene cassettes.</title>
        <authorList>
            <person name="Naas T."/>
            <person name="Mikami Y."/>
            <person name="Imai T."/>
            <person name="Poirel L."/>
            <person name="Nordmann P."/>
        </authorList>
    </citation>
    <scope>NUCLEOTIDE SEQUENCE [GENOMIC DNA]</scope>
    <source>
        <strain>MG-1</strain>
        <plasmid>IncP-beta R751</plasmid>
        <transposon>Tn2000</transposon>
    </source>
</reference>
<reference key="10">
    <citation type="submission" date="2001-07" db="EMBL/GenBank/DDBJ databases">
        <authorList>
            <person name="Partridge S.R."/>
            <person name="Hall R.M."/>
        </authorList>
    </citation>
    <scope>NUCLEOTIDE SEQUENCE [GENOMIC DNA]</scope>
    <source>
        <plasmid>IncW R388</plasmid>
    </source>
</reference>
<reference key="11">
    <citation type="journal article" date="2002" name="Antimicrob. Agents Chemother.">
        <title>Characterization of a novel plasmid-mediated cephalosporinase (CMY-9) and its genetic environment in an Escherichia coli clinical isolate.</title>
        <authorList>
            <person name="Doi Y."/>
            <person name="Shibata N."/>
            <person name="Shibayama K."/>
            <person name="Kamachi K."/>
            <person name="Kurokawa H."/>
            <person name="Yokoyama K."/>
            <person name="Yagi T."/>
            <person name="Arakawa Y."/>
        </authorList>
    </citation>
    <scope>NUCLEOTIDE SEQUENCE [GENOMIC DNA]</scope>
    <source>
        <strain>HKYM68</strain>
        <plasmid>pCMXR1</plasmid>
    </source>
</reference>
<reference key="12">
    <citation type="journal article" date="2002" name="Antimicrob. Agents Chemother.">
        <title>Novel complex sul1-type integron in Escherichia coli carrying bla(CTX-M-9).</title>
        <authorList>
            <person name="Sabate M."/>
            <person name="Navarro F."/>
            <person name="Miro E."/>
            <person name="Campoy S."/>
            <person name="Mirelis B."/>
            <person name="Barbe J."/>
            <person name="Prats G."/>
        </authorList>
    </citation>
    <scope>NUCLEOTIDE SEQUENCE [GENOMIC DNA]</scope>
    <source>
        <strain>785-D</strain>
        <plasmid>pMSP071</plasmid>
    </source>
</reference>
<reference key="13">
    <citation type="submission" date="2002-10" db="EMBL/GenBank/DDBJ databases">
        <title>p1658/97 complete sequence.</title>
        <authorList>
            <person name="Zienkiewicz M."/>
            <person name="Kern-Zdanowicz I."/>
            <person name="Golebiewski M."/>
            <person name="Ceglowski P."/>
        </authorList>
    </citation>
    <scope>NUCLEOTIDE SEQUENCE [GENOMIC DNA]</scope>
    <source>
        <plasmid>p1658/97</plasmid>
    </source>
</reference>
<reference key="14">
    <citation type="journal article" date="2003" name="Antimicrob. Agents Chemother.">
        <title>Plasmid-mediated quinolone resistance in clinical isolates of Escherichia coli from Shanghai, China.</title>
        <authorList>
            <person name="Wang M."/>
            <person name="Tran J.H."/>
            <person name="Jacoby G.A."/>
            <person name="Zhang Y."/>
            <person name="Wang F."/>
            <person name="Hooper D.C."/>
        </authorList>
    </citation>
    <scope>NUCLEOTIDE SEQUENCE [GENOMIC DNA]</scope>
    <source>
        <plasmid>pHSH1</plasmid>
        <plasmid>pHSH2</plasmid>
    </source>
</reference>
<reference key="15">
    <citation type="journal article" date="2003" name="Antimicrob. Agents Chemother.">
        <title>Decreased susceptibility to cefepime in a clinical strain of Escherichia coli related to plasmid- and integron-encoded OXA-30 beta-lactamase.</title>
        <authorList>
            <person name="Dubois V."/>
            <person name="Arpin C."/>
            <person name="Quentin C."/>
            <person name="Texier-Maugein J."/>
            <person name="Poirel L."/>
            <person name="Nordmann P."/>
        </authorList>
    </citation>
    <scope>NUCLEOTIDE SEQUENCE [GENOMIC DNA]</scope>
</reference>
<reference key="16">
    <citation type="journal article" date="2003" name="FEMS Microbiol. Lett.">
        <title>Characterization of In111, a class 1 integron that carries the extended-spectrum beta, -lactamase gene blaIBC-1.</title>
        <authorList>
            <person name="Vourli S."/>
            <person name="Tzouvelekis L.S."/>
            <person name="Tzelepi E."/>
            <person name="Lebessi E."/>
            <person name="Legakis N.J."/>
            <person name="Miriagou V."/>
        </authorList>
    </citation>
    <scope>NUCLEOTIDE SEQUENCE [GENOMIC DNA]</scope>
    <source>
        <plasmid>pAK33</plasmid>
    </source>
</reference>
<reference key="17">
    <citation type="journal article" date="2004" name="Antimicrob. Agents Chemother.">
        <title>CMY-13, a novel inducible cephalosporinase encoded by an Escherichia coli plasmid.</title>
        <authorList>
            <person name="Miriagou V."/>
            <person name="Tzouvelekis L.S."/>
            <person name="Villa L."/>
            <person name="Lebessi E."/>
            <person name="Vatopoulos A.C."/>
            <person name="Carattoli A."/>
            <person name="Tzelepi E."/>
        </authorList>
    </citation>
    <scope>NUCLEOTIDE SEQUENCE [GENOMIC DNA]</scope>
    <source>
        <plasmid>p541</plasmid>
    </source>
</reference>
<reference key="18">
    <citation type="submission" date="2004-12" db="EMBL/GenBank/DDBJ databases">
        <authorList>
            <person name="Partridge S.R."/>
            <person name="Hall R.M."/>
            <person name="Stokes H.W."/>
        </authorList>
    </citation>
    <scope>NUCLEOTIDE SEQUENCE [GENOMIC DNA]</scope>
    <source>
        <plasmid>IncW pSa</plasmid>
    </source>
</reference>
<reference key="19">
    <citation type="journal article" date="2005" name="Antimicrob. Agents Chemother.">
        <title>Emergence of plasmid-mediated quinolone resistance in Escherichia coli in Europe.</title>
        <authorList>
            <person name="Mammeri H."/>
            <person name="Van De Loo M."/>
            <person name="Poirel L."/>
            <person name="Martinez-Martinez L."/>
            <person name="Nordmann P."/>
        </authorList>
    </citation>
    <scope>NUCLEOTIDE SEQUENCE [GENOMIC DNA]</scope>
    <source>
        <strain>Loup</strain>
        <plasmid>pQR-1</plasmid>
    </source>
</reference>
<reference key="20">
    <citation type="journal article" date="2005" name="Antimicrob. Agents Chemother.">
        <title>Detection of qnr in clinical isolates of Escherichia coli from Korea.</title>
        <authorList>
            <person name="Jeong J.-Y."/>
            <person name="Yoon H.J."/>
            <person name="Kim E.S."/>
            <person name="Lee Y."/>
            <person name="Choi S.-H."/>
            <person name="Kim N.J."/>
            <person name="Woo J.H."/>
            <person name="Kim Y.S."/>
        </authorList>
    </citation>
    <scope>NUCLEOTIDE SEQUENCE [GENOMIC DNA]</scope>
    <source>
        <plasmid>pKO56</plasmid>
        <plasmid>pKO97</plasmid>
    </source>
</reference>
<reference key="21">
    <citation type="submission" date="2005-01" db="EMBL/GenBank/DDBJ databases">
        <authorList>
            <person name="Johnson T.J."/>
            <person name="Nolan L.K."/>
        </authorList>
    </citation>
    <scope>NUCLEOTIDE SEQUENCE [GENOMIC DNA]</scope>
    <source>
        <strain>A2363</strain>
        <plasmid>pAPEC-O2-R</plasmid>
    </source>
</reference>
<reference key="22">
    <citation type="submission" date="1991-03" db="EMBL/GenBank/DDBJ databases">
        <authorList>
            <person name="Sundstroem L."/>
            <person name="Swedberg G."/>
            <person name="Skoeld O."/>
        </authorList>
    </citation>
    <scope>NUCLEOTIDE SEQUENCE [GENOMIC DNA] OF 1-120</scope>
    <source>
        <plasmid>pLMO27</plasmid>
        <transposon>Tn5086</transposon>
    </source>
</reference>
<reference evidence="8" key="23">
    <citation type="journal article" date="2023" name="Nat. Commun.">
        <title>Molecular mechanism of plasmid-borne resistance to sulfonamide antibiotics.</title>
        <authorList>
            <person name="Venkatesan M."/>
            <person name="Fruci M."/>
            <person name="Verellen L.A."/>
            <person name="Skarina T."/>
            <person name="Mesa N."/>
            <person name="Flick R."/>
            <person name="Pham C."/>
            <person name="Mahadevan R."/>
            <person name="Stogios P.J."/>
            <person name="Savchenko A."/>
        </authorList>
    </citation>
    <scope>X-RAY CRYSTALLOGRAPHY (2.32 ANGSTROMS) IN COMPLEX WITH SUBSTRATE</scope>
    <scope>FUNCTION</scope>
    <scope>CATALYTIC ACTIVITY</scope>
    <scope>BIOPHYSICOCHEMICAL PROPERTIES</scope>
    <scope>MUTAGENESIS OF PHE-178 AND LEU-180</scope>
</reference>
<comment type="function">
    <text evidence="5">Catalyzes the condensation of para-aminobenzoate (pABA) with 6-hydroxymethyl-7,8-dihydropterin diphosphate (DHPt-PP) to form 7,8-dihydropteroate (H2Pte), the immediate precursor of folate derivatives (PubMed:37419898). Confers resistance to sulfonamide antibiotics, including sulfamethoxazole (SMX), sulfadiazine and sulfisoxazole (PubMed:37419898). The type II enzyme is stable whereas type I DHPS loses its activity rapidly.</text>
</comment>
<comment type="catalytic activity">
    <reaction evidence="5">
        <text>(7,8-dihydropterin-6-yl)methyl diphosphate + 4-aminobenzoate = 7,8-dihydropteroate + diphosphate</text>
        <dbReference type="Rhea" id="RHEA:19949"/>
        <dbReference type="ChEBI" id="CHEBI:17836"/>
        <dbReference type="ChEBI" id="CHEBI:17839"/>
        <dbReference type="ChEBI" id="CHEBI:33019"/>
        <dbReference type="ChEBI" id="CHEBI:72950"/>
        <dbReference type="EC" id="2.5.1.15"/>
    </reaction>
</comment>
<comment type="cofactor">
    <cofactor evidence="2">
        <name>Mg(2+)</name>
        <dbReference type="ChEBI" id="CHEBI:18420"/>
    </cofactor>
</comment>
<comment type="biophysicochemical properties">
    <kinetics>
        <KM evidence="5">8.41 uM for 4-aminobenzoate (at pH 7.5 and 37 degrees Celsius)</KM>
        <KM evidence="5">1004 uM for sulfamethoxazole (at pH 7.5 and 37 degrees Celsius)</KM>
        <text evidence="5">kcat is 0.38 sec(-1) for 4-aminobenzoate as substrate (at pH 7.5 and 37 degrees Celsius) (PubMed:37419898). kcat is 0.26 sec(-1) for sulfamethoxazole as substrate (at pH 7.5 and 37 degrees Celsius) (PubMed:37419898).</text>
    </kinetics>
</comment>
<comment type="pathway">
    <text>Cofactor biosynthesis; tetrahydrofolate biosynthesis; 7,8-dihydrofolate from 2-amino-4-hydroxy-6-hydroxymethyl-7,8-dihydropteridine diphosphate and 4-aminobenzoate: step 1/2.</text>
</comment>
<comment type="subunit">
    <text>Homodimer or homotrimer.</text>
</comment>
<comment type="miscellaneous">
    <text>The sulI gene is located on various large self-transmissible resistance plasmids and on transposons related to Tn21.</text>
</comment>
<comment type="miscellaneous">
    <text>The plasmid pDGO100 contains two copies of the sulI gene.</text>
</comment>
<comment type="similarity">
    <text evidence="7">Belongs to the DHPS family.</text>
</comment>
<geneLocation type="plasmid">
    <name>IncFII R100</name>
    <name>NR1</name>
</geneLocation>
<geneLocation type="plasmid">
    <name>IncW R388</name>
</geneLocation>
<geneLocation type="plasmid">
    <name>pLMO20</name>
</geneLocation>
<geneLocation type="plasmid">
    <name>pLMO27</name>
</geneLocation>
<geneLocation type="plasmid">
    <name>IncN R46</name>
</geneLocation>
<geneLocation type="plasmid">
    <name>pDGO100</name>
</geneLocation>
<geneLocation type="plasmid">
    <name>R6-5</name>
</geneLocation>
<geneLocation type="plasmid">
    <name>pDGO101</name>
</geneLocation>
<geneLocation type="plasmid">
    <name>IncFII NR79</name>
</geneLocation>
<geneLocation type="plasmid">
    <name>IncW pSa</name>
</geneLocation>
<geneLocation type="plasmid">
    <name>IncP-beta R751</name>
</geneLocation>
<geneLocation type="plasmid">
    <name>pCMXR1</name>
</geneLocation>
<geneLocation type="plasmid">
    <name>pMSP071</name>
</geneLocation>
<geneLocation type="plasmid">
    <name>p1658/97</name>
</geneLocation>
<geneLocation type="plasmid">
    <name>pHSH1</name>
</geneLocation>
<geneLocation type="plasmid">
    <name>pHSH2</name>
</geneLocation>
<geneLocation type="plasmid">
    <name>pAK33</name>
</geneLocation>
<geneLocation type="plasmid">
    <name>p541</name>
</geneLocation>
<geneLocation type="plasmid">
    <name>pQR-1</name>
</geneLocation>
<geneLocation type="plasmid">
    <name>pKO56</name>
</geneLocation>
<geneLocation type="plasmid">
    <name>pKO97</name>
</geneLocation>
<geneLocation type="plasmid">
    <name>pAPEC-O2-R</name>
</geneLocation>